<keyword id="KW-1015">Disulfide bond</keyword>
<keyword id="KW-0325">Glycoprotein</keyword>
<keyword id="KW-0378">Hydrolase</keyword>
<keyword id="KW-0408">Iron</keyword>
<keyword id="KW-0479">Metal-binding</keyword>
<keyword id="KW-1185">Reference proteome</keyword>
<keyword id="KW-0964">Secreted</keyword>
<keyword id="KW-0732">Signal</keyword>
<keyword id="KW-0862">Zinc</keyword>
<protein>
    <recommendedName>
        <fullName>Fe(3+)-Zn(2+) purple acid phosphatase 12</fullName>
        <shortName>PAP</shortName>
        <ecNumber>3.1.3.2</ecNumber>
    </recommendedName>
    <alternativeName>
        <fullName>Iron(III)-zinc(II) purple acid phosphatase 12</fullName>
    </alternativeName>
</protein>
<dbReference type="EC" id="3.1.3.2"/>
<dbReference type="EMBL" id="AF492664">
    <property type="protein sequence ID" value="AAM15913.1"/>
    <property type="molecule type" value="mRNA"/>
</dbReference>
<dbReference type="EMBL" id="U48448">
    <property type="protein sequence ID" value="AAA91803.1"/>
    <property type="molecule type" value="Genomic_DNA"/>
</dbReference>
<dbReference type="EMBL" id="AC007290">
    <property type="protein sequence ID" value="AAD26885.1"/>
    <property type="molecule type" value="Genomic_DNA"/>
</dbReference>
<dbReference type="EMBL" id="CP002685">
    <property type="protein sequence ID" value="AEC07951.1"/>
    <property type="molecule type" value="Genomic_DNA"/>
</dbReference>
<dbReference type="EMBL" id="AY065067">
    <property type="protein sequence ID" value="AAL57700.1"/>
    <property type="molecule type" value="mRNA"/>
</dbReference>
<dbReference type="EMBL" id="AY133599">
    <property type="protein sequence ID" value="AAM91429.1"/>
    <property type="molecule type" value="mRNA"/>
</dbReference>
<dbReference type="EMBL" id="F20043">
    <property type="protein sequence ID" value="CAA23388.1"/>
    <property type="molecule type" value="mRNA"/>
</dbReference>
<dbReference type="PIR" id="H84669">
    <property type="entry name" value="H84669"/>
</dbReference>
<dbReference type="RefSeq" id="NP_180287.2">
    <property type="nucleotide sequence ID" value="NM_128277.5"/>
</dbReference>
<dbReference type="SMR" id="Q38924"/>
<dbReference type="FunCoup" id="Q38924">
    <property type="interactions" value="64"/>
</dbReference>
<dbReference type="STRING" id="3702.Q38924"/>
<dbReference type="GlyCosmos" id="Q38924">
    <property type="glycosylation" value="4 sites, No reported glycans"/>
</dbReference>
<dbReference type="GlyGen" id="Q38924">
    <property type="glycosylation" value="4 sites"/>
</dbReference>
<dbReference type="PaxDb" id="3702-AT2G27190.1"/>
<dbReference type="ProteomicsDB" id="249012"/>
<dbReference type="EnsemblPlants" id="AT2G27190.1">
    <property type="protein sequence ID" value="AT2G27190.1"/>
    <property type="gene ID" value="AT2G27190"/>
</dbReference>
<dbReference type="GeneID" id="817261"/>
<dbReference type="Gramene" id="AT2G27190.1">
    <property type="protein sequence ID" value="AT2G27190.1"/>
    <property type="gene ID" value="AT2G27190"/>
</dbReference>
<dbReference type="KEGG" id="ath:AT2G27190"/>
<dbReference type="Araport" id="AT2G27190"/>
<dbReference type="TAIR" id="AT2G27190">
    <property type="gene designation" value="PAP12"/>
</dbReference>
<dbReference type="eggNOG" id="KOG1378">
    <property type="taxonomic scope" value="Eukaryota"/>
</dbReference>
<dbReference type="HOGENOM" id="CLU_013387_0_1_1"/>
<dbReference type="InParanoid" id="Q38924"/>
<dbReference type="OMA" id="NSSRQFW"/>
<dbReference type="CD-CODE" id="4299E36E">
    <property type="entry name" value="Nucleolus"/>
</dbReference>
<dbReference type="PRO" id="PR:Q38924"/>
<dbReference type="Proteomes" id="UP000006548">
    <property type="component" value="Chromosome 2"/>
</dbReference>
<dbReference type="ExpressionAtlas" id="Q38924">
    <property type="expression patterns" value="baseline and differential"/>
</dbReference>
<dbReference type="GO" id="GO:0005576">
    <property type="term" value="C:extracellular region"/>
    <property type="evidence" value="ECO:0007669"/>
    <property type="project" value="UniProtKB-SubCell"/>
</dbReference>
<dbReference type="GO" id="GO:0003993">
    <property type="term" value="F:acid phosphatase activity"/>
    <property type="evidence" value="ECO:0000315"/>
    <property type="project" value="TAIR"/>
</dbReference>
<dbReference type="GO" id="GO:0046872">
    <property type="term" value="F:metal ion binding"/>
    <property type="evidence" value="ECO:0007669"/>
    <property type="project" value="UniProtKB-KW"/>
</dbReference>
<dbReference type="GO" id="GO:0016036">
    <property type="term" value="P:cellular response to phosphate starvation"/>
    <property type="evidence" value="ECO:0000270"/>
    <property type="project" value="TAIR"/>
</dbReference>
<dbReference type="CDD" id="cd00063">
    <property type="entry name" value="FN3"/>
    <property type="match status" value="1"/>
</dbReference>
<dbReference type="CDD" id="cd00839">
    <property type="entry name" value="MPP_PAPs"/>
    <property type="match status" value="1"/>
</dbReference>
<dbReference type="FunFam" id="2.60.40.380:FF:000001">
    <property type="entry name" value="Fe(3+)-Zn(2+) purple acid phosphatase"/>
    <property type="match status" value="1"/>
</dbReference>
<dbReference type="FunFam" id="3.60.21.10:FF:000034">
    <property type="entry name" value="Fe(3+)-Zn(2+) purple acid phosphatase"/>
    <property type="match status" value="1"/>
</dbReference>
<dbReference type="Gene3D" id="3.60.21.10">
    <property type="match status" value="1"/>
</dbReference>
<dbReference type="Gene3D" id="2.60.40.380">
    <property type="entry name" value="Purple acid phosphatase-like, N-terminal"/>
    <property type="match status" value="1"/>
</dbReference>
<dbReference type="InterPro" id="IPR004843">
    <property type="entry name" value="Calcineurin-like_PHP_ApaH"/>
</dbReference>
<dbReference type="InterPro" id="IPR003961">
    <property type="entry name" value="FN3_dom"/>
</dbReference>
<dbReference type="InterPro" id="IPR029052">
    <property type="entry name" value="Metallo-depent_PP-like"/>
</dbReference>
<dbReference type="InterPro" id="IPR041792">
    <property type="entry name" value="MPP_PAP"/>
</dbReference>
<dbReference type="InterPro" id="IPR039331">
    <property type="entry name" value="PPA-like"/>
</dbReference>
<dbReference type="InterPro" id="IPR008963">
    <property type="entry name" value="Purple_acid_Pase-like_N"/>
</dbReference>
<dbReference type="InterPro" id="IPR015914">
    <property type="entry name" value="Purple_acid_Pase_N"/>
</dbReference>
<dbReference type="InterPro" id="IPR025733">
    <property type="entry name" value="Purple_acid_PPase_C_dom"/>
</dbReference>
<dbReference type="PANTHER" id="PTHR22953">
    <property type="entry name" value="ACID PHOSPHATASE RELATED"/>
    <property type="match status" value="1"/>
</dbReference>
<dbReference type="PANTHER" id="PTHR22953:SF35">
    <property type="entry name" value="FE(3+)-ZN(2+) PURPLE ACID PHOSPHATASE 12"/>
    <property type="match status" value="1"/>
</dbReference>
<dbReference type="Pfam" id="PF00149">
    <property type="entry name" value="Metallophos"/>
    <property type="match status" value="1"/>
</dbReference>
<dbReference type="Pfam" id="PF14008">
    <property type="entry name" value="Metallophos_C"/>
    <property type="match status" value="1"/>
</dbReference>
<dbReference type="Pfam" id="PF16656">
    <property type="entry name" value="Pur_ac_phosph_N"/>
    <property type="match status" value="1"/>
</dbReference>
<dbReference type="SUPFAM" id="SSF56300">
    <property type="entry name" value="Metallo-dependent phosphatases"/>
    <property type="match status" value="1"/>
</dbReference>
<dbReference type="SUPFAM" id="SSF49363">
    <property type="entry name" value="Purple acid phosphatase, N-terminal domain"/>
    <property type="match status" value="1"/>
</dbReference>
<accession>Q38924</accession>
<accession>Q42349</accession>
<accession>Q540Q7</accession>
<accession>Q8VZC6</accession>
<accession>Q9SHS9</accession>
<evidence type="ECO:0000250" key="1"/>
<evidence type="ECO:0000255" key="2"/>
<evidence type="ECO:0000269" key="3">
    <source>
    </source>
</evidence>
<evidence type="ECO:0000269" key="4">
    <source>
    </source>
</evidence>
<evidence type="ECO:0000305" key="5"/>
<proteinExistence type="evidence at transcript level"/>
<feature type="signal peptide" evidence="2">
    <location>
        <begin position="1"/>
        <end position="28"/>
    </location>
</feature>
<feature type="chain" id="PRO_0000023993" description="Fe(3+)-Zn(2+) purple acid phosphatase 12">
    <location>
        <begin position="29"/>
        <end position="469"/>
    </location>
</feature>
<feature type="active site" description="Proton donor" evidence="1">
    <location>
        <position position="329"/>
    </location>
</feature>
<feature type="binding site" evidence="1">
    <location>
        <position position="168"/>
    </location>
    <ligand>
        <name>Fe cation</name>
        <dbReference type="ChEBI" id="CHEBI:24875"/>
    </ligand>
</feature>
<feature type="binding site" evidence="1">
    <location>
        <position position="197"/>
    </location>
    <ligand>
        <name>Fe cation</name>
        <dbReference type="ChEBI" id="CHEBI:24875"/>
    </ligand>
</feature>
<feature type="binding site" evidence="1">
    <location>
        <position position="197"/>
    </location>
    <ligand>
        <name>Zn(2+)</name>
        <dbReference type="ChEBI" id="CHEBI:29105"/>
    </ligand>
</feature>
<feature type="binding site" evidence="1">
    <location>
        <position position="200"/>
    </location>
    <ligand>
        <name>Fe cation</name>
        <dbReference type="ChEBI" id="CHEBI:24875"/>
    </ligand>
</feature>
<feature type="binding site" evidence="1">
    <location>
        <position position="234"/>
    </location>
    <ligand>
        <name>substrate</name>
    </ligand>
</feature>
<feature type="binding site" evidence="1">
    <location>
        <position position="234"/>
    </location>
    <ligand>
        <name>Zn(2+)</name>
        <dbReference type="ChEBI" id="CHEBI:29105"/>
    </ligand>
</feature>
<feature type="binding site" evidence="1">
    <location>
        <position position="319"/>
    </location>
    <ligand>
        <name>Zn(2+)</name>
        <dbReference type="ChEBI" id="CHEBI:29105"/>
    </ligand>
</feature>
<feature type="binding site" evidence="1">
    <location>
        <begin position="356"/>
        <end position="358"/>
    </location>
    <ligand>
        <name>substrate</name>
    </ligand>
</feature>
<feature type="binding site" evidence="1">
    <location>
        <position position="356"/>
    </location>
    <ligand>
        <name>Zn(2+)</name>
        <dbReference type="ChEBI" id="CHEBI:29105"/>
    </ligand>
</feature>
<feature type="binding site" evidence="1">
    <location>
        <position position="358"/>
    </location>
    <ligand>
        <name>Fe cation</name>
        <dbReference type="ChEBI" id="CHEBI:24875"/>
    </ligand>
</feature>
<feature type="glycosylation site" description="N-linked (GlcNAc...) asparagine" evidence="2">
    <location>
        <position position="114"/>
    </location>
</feature>
<feature type="glycosylation site" description="N-linked (GlcNAc...) asparagine" evidence="2">
    <location>
        <position position="176"/>
    </location>
</feature>
<feature type="glycosylation site" description="N-linked (GlcNAc...) asparagine" evidence="2">
    <location>
        <position position="307"/>
    </location>
</feature>
<feature type="glycosylation site" description="N-linked (GlcNAc...) asparagine" evidence="2">
    <location>
        <position position="429"/>
    </location>
</feature>
<feature type="disulfide bond" description="Interchain" evidence="1">
    <location>
        <position position="378"/>
    </location>
</feature>
<feature type="sequence conflict" description="In Ref. 1; AAM15913 and 3; AAD26885." evidence="5" ref="1 3">
    <original>P</original>
    <variation>H</variation>
    <location>
        <position position="57"/>
    </location>
</feature>
<feature type="sequence conflict" description="In Ref. 2; AAA91803." evidence="5" ref="2">
    <original>Q</original>
    <variation>R</variation>
    <location>
        <position position="91"/>
    </location>
</feature>
<feature type="sequence conflict" description="In Ref. 2; AAA91803." evidence="5" ref="2">
    <original>E</original>
    <variation>K</variation>
    <location>
        <position position="97"/>
    </location>
</feature>
<feature type="sequence conflict" description="In Ref. 2; AAA91803." evidence="5" ref="2">
    <original>I</original>
    <variation>T</variation>
    <location>
        <position position="151"/>
    </location>
</feature>
<feature type="sequence conflict" description="In Ref. 6; CAA23388." evidence="5" ref="6">
    <original>G</original>
    <variation>R</variation>
    <location>
        <position position="216"/>
    </location>
</feature>
<feature type="sequence conflict" description="In Ref. 6; CAA23388." evidence="5" ref="6">
    <original>G</original>
    <variation>R</variation>
    <location>
        <position position="264"/>
    </location>
</feature>
<comment type="catalytic activity">
    <reaction>
        <text>a phosphate monoester + H2O = an alcohol + phosphate</text>
        <dbReference type="Rhea" id="RHEA:15017"/>
        <dbReference type="ChEBI" id="CHEBI:15377"/>
        <dbReference type="ChEBI" id="CHEBI:30879"/>
        <dbReference type="ChEBI" id="CHEBI:43474"/>
        <dbReference type="ChEBI" id="CHEBI:67140"/>
        <dbReference type="EC" id="3.1.3.2"/>
    </reaction>
</comment>
<comment type="cofactor">
    <cofactor evidence="1">
        <name>Fe cation</name>
        <dbReference type="ChEBI" id="CHEBI:24875"/>
    </cofactor>
    <text evidence="1">Binds 1 Fe cation per subunit.</text>
</comment>
<comment type="cofactor">
    <cofactor evidence="1">
        <name>Zn(2+)</name>
        <dbReference type="ChEBI" id="CHEBI:29105"/>
    </cofactor>
    <text evidence="1">Binds 1 zinc ion per subunit.</text>
</comment>
<comment type="subunit">
    <text evidence="1">Homodimer; disulfide-linked.</text>
</comment>
<comment type="subcellular location">
    <subcellularLocation>
        <location>Secreted</location>
    </subcellularLocation>
</comment>
<comment type="tissue specificity">
    <text evidence="4">Expressed in roots, stems, leaves, flowers and siliques.</text>
</comment>
<comment type="induction">
    <text evidence="3">Slightly by phosphate deprivation.</text>
</comment>
<comment type="similarity">
    <text evidence="5">Belongs to the metallophosphoesterase superfamily. Purple acid phosphatase family.</text>
</comment>
<name>PPA12_ARATH</name>
<gene>
    <name type="primary">PAP12</name>
    <name type="synonym">At10</name>
    <name type="synonym">Ath1</name>
    <name type="synonym">PAP1</name>
    <name type="ordered locus">At2g27190</name>
    <name type="ORF">T22O13.4</name>
</gene>
<organism>
    <name type="scientific">Arabidopsis thaliana</name>
    <name type="common">Mouse-ear cress</name>
    <dbReference type="NCBI Taxonomy" id="3702"/>
    <lineage>
        <taxon>Eukaryota</taxon>
        <taxon>Viridiplantae</taxon>
        <taxon>Streptophyta</taxon>
        <taxon>Embryophyta</taxon>
        <taxon>Tracheophyta</taxon>
        <taxon>Spermatophyta</taxon>
        <taxon>Magnoliopsida</taxon>
        <taxon>eudicotyledons</taxon>
        <taxon>Gunneridae</taxon>
        <taxon>Pentapetalae</taxon>
        <taxon>rosids</taxon>
        <taxon>malvids</taxon>
        <taxon>Brassicales</taxon>
        <taxon>Brassicaceae</taxon>
        <taxon>Camelineae</taxon>
        <taxon>Arabidopsis</taxon>
    </lineage>
</organism>
<reference key="1">
    <citation type="journal article" date="2002" name="J. Biol. Chem.">
        <title>Purple acid phosphatases of Arabidopsis thaliana. Comparative analysis and differential regulation by phosphate deprivation.</title>
        <authorList>
            <person name="Li D."/>
            <person name="Zhu H."/>
            <person name="Liu K."/>
            <person name="Liu X."/>
            <person name="Leggewie G."/>
            <person name="Udvardi M."/>
            <person name="Wang D."/>
        </authorList>
    </citation>
    <scope>NUCLEOTIDE SEQUENCE [MRNA]</scope>
    <scope>INDUCTION</scope>
    <scope>GENE FAMILY</scope>
    <scope>NOMENCLATURE</scope>
    <source>
        <strain>cv. Col-1</strain>
    </source>
</reference>
<reference key="2">
    <citation type="submission" date="1996-02" db="EMBL/GenBank/DDBJ databases">
        <authorList>
            <person name="Patel K.S."/>
            <person name="Lockless S.W."/>
            <person name="McKnight T.D."/>
        </authorList>
    </citation>
    <scope>NUCLEOTIDE SEQUENCE [GENOMIC DNA]</scope>
    <source>
        <strain>cv. Landsberg erecta</strain>
    </source>
</reference>
<reference key="3">
    <citation type="journal article" date="1999" name="Nature">
        <title>Sequence and analysis of chromosome 2 of the plant Arabidopsis thaliana.</title>
        <authorList>
            <person name="Lin X."/>
            <person name="Kaul S."/>
            <person name="Rounsley S.D."/>
            <person name="Shea T.P."/>
            <person name="Benito M.-I."/>
            <person name="Town C.D."/>
            <person name="Fujii C.Y."/>
            <person name="Mason T.M."/>
            <person name="Bowman C.L."/>
            <person name="Barnstead M.E."/>
            <person name="Feldblyum T.V."/>
            <person name="Buell C.R."/>
            <person name="Ketchum K.A."/>
            <person name="Lee J.J."/>
            <person name="Ronning C.M."/>
            <person name="Koo H.L."/>
            <person name="Moffat K.S."/>
            <person name="Cronin L.A."/>
            <person name="Shen M."/>
            <person name="Pai G."/>
            <person name="Van Aken S."/>
            <person name="Umayam L."/>
            <person name="Tallon L.J."/>
            <person name="Gill J.E."/>
            <person name="Adams M.D."/>
            <person name="Carrera A.J."/>
            <person name="Creasy T.H."/>
            <person name="Goodman H.M."/>
            <person name="Somerville C.R."/>
            <person name="Copenhaver G.P."/>
            <person name="Preuss D."/>
            <person name="Nierman W.C."/>
            <person name="White O."/>
            <person name="Eisen J.A."/>
            <person name="Salzberg S.L."/>
            <person name="Fraser C.M."/>
            <person name="Venter J.C."/>
        </authorList>
    </citation>
    <scope>NUCLEOTIDE SEQUENCE [LARGE SCALE GENOMIC DNA]</scope>
    <source>
        <strain>cv. Columbia</strain>
    </source>
</reference>
<reference key="4">
    <citation type="journal article" date="2017" name="Plant J.">
        <title>Araport11: a complete reannotation of the Arabidopsis thaliana reference genome.</title>
        <authorList>
            <person name="Cheng C.Y."/>
            <person name="Krishnakumar V."/>
            <person name="Chan A.P."/>
            <person name="Thibaud-Nissen F."/>
            <person name="Schobel S."/>
            <person name="Town C.D."/>
        </authorList>
    </citation>
    <scope>GENOME REANNOTATION</scope>
    <source>
        <strain>cv. Columbia</strain>
    </source>
</reference>
<reference key="5">
    <citation type="journal article" date="2003" name="Science">
        <title>Empirical analysis of transcriptional activity in the Arabidopsis genome.</title>
        <authorList>
            <person name="Yamada K."/>
            <person name="Lim J."/>
            <person name="Dale J.M."/>
            <person name="Chen H."/>
            <person name="Shinn P."/>
            <person name="Palm C.J."/>
            <person name="Southwick A.M."/>
            <person name="Wu H.C."/>
            <person name="Kim C.J."/>
            <person name="Nguyen M."/>
            <person name="Pham P.K."/>
            <person name="Cheuk R.F."/>
            <person name="Karlin-Newmann G."/>
            <person name="Liu S.X."/>
            <person name="Lam B."/>
            <person name="Sakano H."/>
            <person name="Wu T."/>
            <person name="Yu G."/>
            <person name="Miranda M."/>
            <person name="Quach H.L."/>
            <person name="Tripp M."/>
            <person name="Chang C.H."/>
            <person name="Lee J.M."/>
            <person name="Toriumi M.J."/>
            <person name="Chan M.M."/>
            <person name="Tang C.C."/>
            <person name="Onodera C.S."/>
            <person name="Deng J.M."/>
            <person name="Akiyama K."/>
            <person name="Ansari Y."/>
            <person name="Arakawa T."/>
            <person name="Banh J."/>
            <person name="Banno F."/>
            <person name="Bowser L."/>
            <person name="Brooks S.Y."/>
            <person name="Carninci P."/>
            <person name="Chao Q."/>
            <person name="Choy N."/>
            <person name="Enju A."/>
            <person name="Goldsmith A.D."/>
            <person name="Gurjal M."/>
            <person name="Hansen N.F."/>
            <person name="Hayashizaki Y."/>
            <person name="Johnson-Hopson C."/>
            <person name="Hsuan V.W."/>
            <person name="Iida K."/>
            <person name="Karnes M."/>
            <person name="Khan S."/>
            <person name="Koesema E."/>
            <person name="Ishida J."/>
            <person name="Jiang P.X."/>
            <person name="Jones T."/>
            <person name="Kawai J."/>
            <person name="Kamiya A."/>
            <person name="Meyers C."/>
            <person name="Nakajima M."/>
            <person name="Narusaka M."/>
            <person name="Seki M."/>
            <person name="Sakurai T."/>
            <person name="Satou M."/>
            <person name="Tamse R."/>
            <person name="Vaysberg M."/>
            <person name="Wallender E.K."/>
            <person name="Wong C."/>
            <person name="Yamamura Y."/>
            <person name="Yuan S."/>
            <person name="Shinozaki K."/>
            <person name="Davis R.W."/>
            <person name="Theologis A."/>
            <person name="Ecker J.R."/>
        </authorList>
    </citation>
    <scope>NUCLEOTIDE SEQUENCE [LARGE SCALE MRNA]</scope>
    <source>
        <strain>cv. Columbia</strain>
    </source>
</reference>
<reference key="6">
    <citation type="journal article" date="1996" name="Plant J.">
        <title>Further progress towards a catalogue of all Arabidopsis genes: analysis of a set of 5000 non-redundant ESTs.</title>
        <authorList>
            <person name="Cooke R."/>
            <person name="Raynal M."/>
            <person name="Laudie M."/>
            <person name="Grellet F."/>
            <person name="Delseny M."/>
            <person name="Morris P.-C."/>
            <person name="Guerrier D."/>
            <person name="Giraudat J."/>
            <person name="Quigley F."/>
            <person name="Clabault G."/>
            <person name="Li Y.-F."/>
            <person name="Mache R."/>
            <person name="Krivitzky M."/>
            <person name="Gy I.J.-J."/>
            <person name="Kreis M."/>
            <person name="Lecharny A."/>
            <person name="Parmentier Y."/>
            <person name="Marbach J."/>
            <person name="Fleck J."/>
            <person name="Clement B."/>
            <person name="Philipps G."/>
            <person name="Herve C."/>
            <person name="Bardet C."/>
            <person name="Tremousaygue D."/>
            <person name="Lescure B."/>
            <person name="Lacomme C."/>
            <person name="Roby D."/>
            <person name="Jourjon M.-F."/>
            <person name="Chabrier P."/>
            <person name="Charpenteau J.-L."/>
            <person name="Desprez T."/>
            <person name="Amselem J."/>
            <person name="Chiapello H."/>
            <person name="Hoefte H."/>
        </authorList>
    </citation>
    <scope>NUCLEOTIDE SEQUENCE [LARGE SCALE MRNA] OF 138-268</scope>
    <source>
        <strain>cv. Columbia</strain>
    </source>
</reference>
<reference key="7">
    <citation type="journal article" date="2005" name="Plant Mol. Biol.">
        <title>Expression patterns of purple acid phosphatase genes in Arabidopsis organs and functional analysis of AtPAP23 predominantly transcribed in flower.</title>
        <authorList>
            <person name="Zhu H."/>
            <person name="Qian W."/>
            <person name="Lu X."/>
            <person name="Li D."/>
            <person name="Liu X."/>
            <person name="Liu K."/>
            <person name="Wang D."/>
        </authorList>
    </citation>
    <scope>TISSUE SPECIFICITY</scope>
</reference>
<sequence length="469" mass="54123">MSSRSDLKIKRVSLIIFLLSVLVEFCYGGFTSEYVRGSDLPDDMPLDSDVFEVPPGPNSPQQVHVTQGNHEGNGVIISWVTPVKPGSKTVQYWCENEKSRKQAEATVNTYRFFNYTSGYIHHCLIDDLEFDTKYYYEIGSGKWSRRFWFFIPPKSGPDVPYTFGLIGDLGQTYDSNSTLSHYEMNPGKGQAVLFVGDLSYADRYPNHDNNRWDTWGRFVERSVAYQPWIWTAGNHEIDFVPDIGEIEPFKPFMNRYHTPHKASGSISPLWYSIKRASAYIIVMSCYSSYGIYTPQYKWLEKELQGVNRTETPWLIVLVHSPFYSSYVHHYMEGETLRVMYEQWFVKYKVDVVFAGHVHAYERSERVSNIAYNIVNGLCEPISDESAPIYITIGDGGNSEGLLTDMMQPQPKYSAFREASFGHGLLEIKNRTHAYFSWNRNQDGNAVAADSVWLLNRFWRAQKKTWLDAF</sequence>